<comment type="function">
    <text>Mediates the splicing of pre-mRNA by binding to the loop I region of U1-snRNA.</text>
</comment>
<comment type="subunit">
    <text evidence="3 5 6 7 8 9">Component of the spliceosome. Interacts with CYP63, U2AF35A, U2AF35B, SRZ21, RSZ22, SR34, SR45, SR45A and SCL33.</text>
</comment>
<comment type="interaction">
    <interactant intactId="EBI-1633812">
        <id>Q42404</id>
    </interactant>
    <interactant intactId="EBI-4473692">
        <id>O80575</id>
        <label>At2g44050</label>
    </interactant>
    <organismsDiffer>false</organismsDiffer>
    <experiments>3</experiments>
</comment>
<comment type="interaction">
    <interactant intactId="EBI-1633812">
        <id>Q42404</id>
    </interactant>
    <interactant intactId="EBI-25506855">
        <id>O23160</id>
        <label>MYB73</label>
    </interactant>
    <organismsDiffer>false</organismsDiffer>
    <experiments>3</experiments>
</comment>
<comment type="interaction">
    <interactant intactId="EBI-1633812">
        <id>Q42404</id>
    </interactant>
    <interactant intactId="EBI-927132">
        <id>P92964</id>
        <label>RS31</label>
    </interactant>
    <organismsDiffer>false</organismsDiffer>
    <experiments>3</experiments>
</comment>
<comment type="interaction">
    <interactant intactId="EBI-1633812">
        <id>Q42404</id>
    </interactant>
    <interactant intactId="EBI-927172">
        <id>O81127</id>
        <label>RSZ21</label>
    </interactant>
    <organismsDiffer>false</organismsDiffer>
    <experiments>4</experiments>
</comment>
<comment type="interaction">
    <interactant intactId="EBI-1633812">
        <id>Q42404</id>
    </interactant>
    <interactant intactId="EBI-1633829">
        <id>O81126</id>
        <label>RSZ22</label>
    </interactant>
    <organismsDiffer>false</organismsDiffer>
    <experiments>4</experiments>
</comment>
<comment type="interaction">
    <interactant intactId="EBI-1633812">
        <id>Q42404</id>
    </interactant>
    <interactant intactId="EBI-927103">
        <id>Q9SEU4</id>
        <label>SCL33</label>
    </interactant>
    <organismsDiffer>false</organismsDiffer>
    <experiments>3</experiments>
</comment>
<comment type="interaction">
    <interactant intactId="EBI-1633812">
        <id>Q42404</id>
    </interactant>
    <interactant intactId="EBI-1792008">
        <id>Q9SEE9</id>
        <label>SR45</label>
    </interactant>
    <organismsDiffer>false</organismsDiffer>
    <experiments>4</experiments>
</comment>
<comment type="subcellular location">
    <subcellularLocation>
        <location evidence="4 7">Nucleus speckle</location>
    </subcellularLocation>
    <subcellularLocation>
        <location evidence="7">Nucleus</location>
        <location evidence="7">Nucleoplasm</location>
    </subcellularLocation>
    <text evidence="7">The exchange between speckles and nucleoplasm is sensitive to ongoing transcription and phosphorylation.</text>
</comment>
<comment type="alternative products">
    <event type="alternative splicing"/>
    <isoform>
        <id>Q42404-1</id>
        <name>Long</name>
        <sequence type="displayed"/>
    </isoform>
    <isoform>
        <id>Q42404-2</id>
        <name>Short</name>
        <sequence type="described" ref="VSP_005853 VSP_005854"/>
    </isoform>
</comment>
<comment type="tissue specificity">
    <text>Ubiquitous.</text>
</comment>
<comment type="PTM">
    <text evidence="7">Phosphorylated. The association and dissociation with SR45 is not affected by the phosphorylation status (PubMed:18414657).</text>
</comment>
<gene>
    <name type="primary">RNU1</name>
    <name type="ordered locus">At3g50670</name>
    <name type="ORF">T3A5.50</name>
</gene>
<dbReference type="EMBL" id="M93439">
    <property type="protein sequence ID" value="AAD12773.1"/>
    <property type="molecule type" value="mRNA"/>
</dbReference>
<dbReference type="EMBL" id="U52909">
    <property type="protein sequence ID" value="AAD12774.1"/>
    <property type="molecule type" value="Genomic_DNA"/>
</dbReference>
<dbReference type="EMBL" id="U52909">
    <property type="protein sequence ID" value="AAD12775.1"/>
    <property type="molecule type" value="Genomic_DNA"/>
</dbReference>
<dbReference type="EMBL" id="U52910">
    <property type="protein sequence ID" value="AAD12776.1"/>
    <property type="molecule type" value="mRNA"/>
</dbReference>
<dbReference type="EMBL" id="AL132979">
    <property type="protein sequence ID" value="CAB62436.1"/>
    <property type="molecule type" value="Genomic_DNA"/>
</dbReference>
<dbReference type="EMBL" id="CP002686">
    <property type="protein sequence ID" value="AEE78692.1"/>
    <property type="molecule type" value="Genomic_DNA"/>
</dbReference>
<dbReference type="EMBL" id="CP002686">
    <property type="protein sequence ID" value="AEE78693.1"/>
    <property type="molecule type" value="Genomic_DNA"/>
</dbReference>
<dbReference type="EMBL" id="AY039874">
    <property type="protein sequence ID" value="AAK63978.1"/>
    <property type="molecule type" value="mRNA"/>
</dbReference>
<dbReference type="EMBL" id="AY094003">
    <property type="protein sequence ID" value="AAM16264.1"/>
    <property type="molecule type" value="mRNA"/>
</dbReference>
<dbReference type="PIR" id="S71367">
    <property type="entry name" value="S71367"/>
</dbReference>
<dbReference type="RefSeq" id="NP_190636.1">
    <molecule id="Q42404-1"/>
    <property type="nucleotide sequence ID" value="NM_114927.4"/>
</dbReference>
<dbReference type="RefSeq" id="NP_850676.1">
    <molecule id="Q42404-2"/>
    <property type="nucleotide sequence ID" value="NM_180345.1"/>
</dbReference>
<dbReference type="SMR" id="Q42404"/>
<dbReference type="BioGRID" id="9548">
    <property type="interactions" value="19"/>
</dbReference>
<dbReference type="FunCoup" id="Q42404">
    <property type="interactions" value="1727"/>
</dbReference>
<dbReference type="IntAct" id="Q42404">
    <property type="interactions" value="12"/>
</dbReference>
<dbReference type="MINT" id="Q42404"/>
<dbReference type="STRING" id="3702.Q42404"/>
<dbReference type="iPTMnet" id="Q42404"/>
<dbReference type="PaxDb" id="3702-AT3G50670.1"/>
<dbReference type="ProteomicsDB" id="228036">
    <molecule id="Q42404-1"/>
</dbReference>
<dbReference type="EnsemblPlants" id="AT3G50670.1">
    <molecule id="Q42404-1"/>
    <property type="protein sequence ID" value="AT3G50670.1"/>
    <property type="gene ID" value="AT3G50670"/>
</dbReference>
<dbReference type="EnsemblPlants" id="AT3G50670.2">
    <molecule id="Q42404-2"/>
    <property type="protein sequence ID" value="AT3G50670.2"/>
    <property type="gene ID" value="AT3G50670"/>
</dbReference>
<dbReference type="Gramene" id="AT3G50670.1">
    <molecule id="Q42404-1"/>
    <property type="protein sequence ID" value="AT3G50670.1"/>
    <property type="gene ID" value="AT3G50670"/>
</dbReference>
<dbReference type="Gramene" id="AT3G50670.2">
    <molecule id="Q42404-2"/>
    <property type="protein sequence ID" value="AT3G50670.2"/>
    <property type="gene ID" value="AT3G50670"/>
</dbReference>
<dbReference type="KEGG" id="ath:AT3G50670"/>
<dbReference type="Araport" id="AT3G50670"/>
<dbReference type="TAIR" id="AT3G50670">
    <property type="gene designation" value="U1-70K"/>
</dbReference>
<dbReference type="eggNOG" id="KOG0113">
    <property type="taxonomic scope" value="Eukaryota"/>
</dbReference>
<dbReference type="HOGENOM" id="CLU_045151_2_1_1"/>
<dbReference type="InParanoid" id="Q42404"/>
<dbReference type="OMA" id="FIEYQHK"/>
<dbReference type="OrthoDB" id="4207594at2759"/>
<dbReference type="PhylomeDB" id="Q42404"/>
<dbReference type="CD-CODE" id="4299E36E">
    <property type="entry name" value="Nucleolus"/>
</dbReference>
<dbReference type="CD-CODE" id="9A8A194B">
    <property type="entry name" value="Nuclear speckle"/>
</dbReference>
<dbReference type="PRO" id="PR:Q42404"/>
<dbReference type="Proteomes" id="UP000006548">
    <property type="component" value="Chromosome 3"/>
</dbReference>
<dbReference type="ExpressionAtlas" id="Q42404">
    <property type="expression patterns" value="baseline and differential"/>
</dbReference>
<dbReference type="GO" id="GO:0016607">
    <property type="term" value="C:nuclear speck"/>
    <property type="evidence" value="ECO:0007669"/>
    <property type="project" value="UniProtKB-SubCell"/>
</dbReference>
<dbReference type="GO" id="GO:0005634">
    <property type="term" value="C:nucleus"/>
    <property type="evidence" value="ECO:0000314"/>
    <property type="project" value="TAIR"/>
</dbReference>
<dbReference type="GO" id="GO:0005681">
    <property type="term" value="C:spliceosomal complex"/>
    <property type="evidence" value="ECO:0007669"/>
    <property type="project" value="UniProtKB-KW"/>
</dbReference>
<dbReference type="GO" id="GO:0030619">
    <property type="term" value="F:U1 snRNA binding"/>
    <property type="evidence" value="ECO:0007669"/>
    <property type="project" value="InterPro"/>
</dbReference>
<dbReference type="GO" id="GO:0000398">
    <property type="term" value="P:mRNA splicing, via spliceosome"/>
    <property type="evidence" value="ECO:0000314"/>
    <property type="project" value="TAIR"/>
</dbReference>
<dbReference type="CDD" id="cd12236">
    <property type="entry name" value="RRM_snRNP70"/>
    <property type="match status" value="1"/>
</dbReference>
<dbReference type="FunFam" id="3.30.70.330:FF:001585">
    <property type="entry name" value="U1 small nuclear ribonucleoprotein 70 kDa"/>
    <property type="match status" value="1"/>
</dbReference>
<dbReference type="Gene3D" id="3.30.70.330">
    <property type="match status" value="1"/>
</dbReference>
<dbReference type="InterPro" id="IPR012677">
    <property type="entry name" value="Nucleotide-bd_a/b_plait_sf"/>
</dbReference>
<dbReference type="InterPro" id="IPR035979">
    <property type="entry name" value="RBD_domain_sf"/>
</dbReference>
<dbReference type="InterPro" id="IPR000504">
    <property type="entry name" value="RRM_dom"/>
</dbReference>
<dbReference type="InterPro" id="IPR034143">
    <property type="entry name" value="snRNP70_RRM"/>
</dbReference>
<dbReference type="InterPro" id="IPR051183">
    <property type="entry name" value="U1_U11-U12_snRNP_70-35kDa"/>
</dbReference>
<dbReference type="InterPro" id="IPR022023">
    <property type="entry name" value="U1snRNP70_N"/>
</dbReference>
<dbReference type="PANTHER" id="PTHR13952">
    <property type="entry name" value="U1 SMALL NUCLEAR RIBONUCLEOPROTEIN 70 KD"/>
    <property type="match status" value="1"/>
</dbReference>
<dbReference type="PANTHER" id="PTHR13952:SF5">
    <property type="entry name" value="U1 SMALL NUCLEAR RIBONUCLEOPROTEIN 70 KDA"/>
    <property type="match status" value="1"/>
</dbReference>
<dbReference type="Pfam" id="PF00076">
    <property type="entry name" value="RRM_1"/>
    <property type="match status" value="1"/>
</dbReference>
<dbReference type="Pfam" id="PF12220">
    <property type="entry name" value="U1snRNP70_N"/>
    <property type="match status" value="1"/>
</dbReference>
<dbReference type="SMART" id="SM00360">
    <property type="entry name" value="RRM"/>
    <property type="match status" value="1"/>
</dbReference>
<dbReference type="SUPFAM" id="SSF54928">
    <property type="entry name" value="RNA-binding domain, RBD"/>
    <property type="match status" value="1"/>
</dbReference>
<dbReference type="PROSITE" id="PS50102">
    <property type="entry name" value="RRM"/>
    <property type="match status" value="1"/>
</dbReference>
<name>RU17_ARATH</name>
<proteinExistence type="evidence at protein level"/>
<accession>Q42404</accession>
<accession>Q42378</accession>
<evidence type="ECO:0000255" key="1">
    <source>
        <dbReference type="PROSITE-ProRule" id="PRU00176"/>
    </source>
</evidence>
<evidence type="ECO:0000256" key="2">
    <source>
        <dbReference type="SAM" id="MobiDB-lite"/>
    </source>
</evidence>
<evidence type="ECO:0000269" key="3">
    <source>
    </source>
</evidence>
<evidence type="ECO:0000269" key="4">
    <source>
    </source>
</evidence>
<evidence type="ECO:0000269" key="5">
    <source>
    </source>
</evidence>
<evidence type="ECO:0000269" key="6">
    <source>
    </source>
</evidence>
<evidence type="ECO:0000269" key="7">
    <source>
    </source>
</evidence>
<evidence type="ECO:0000269" key="8">
    <source>
    </source>
</evidence>
<evidence type="ECO:0000269" key="9">
    <source>
    </source>
</evidence>
<evidence type="ECO:0000303" key="10">
    <source>
    </source>
</evidence>
<evidence type="ECO:0007744" key="11">
    <source>
    </source>
</evidence>
<feature type="chain" id="PRO_0000081885" description="U1 small nuclear ribonucleoprotein 70 kDa">
    <location>
        <begin position="1"/>
        <end position="427"/>
    </location>
</feature>
<feature type="domain" description="RRM" evidence="1">
    <location>
        <begin position="138"/>
        <end position="216"/>
    </location>
</feature>
<feature type="region of interest" description="Disordered" evidence="2">
    <location>
        <begin position="82"/>
        <end position="102"/>
    </location>
</feature>
<feature type="region of interest" description="Disordered" evidence="2">
    <location>
        <begin position="215"/>
        <end position="427"/>
    </location>
</feature>
<feature type="compositionally biased region" description="Basic and acidic residues" evidence="2">
    <location>
        <begin position="93"/>
        <end position="102"/>
    </location>
</feature>
<feature type="compositionally biased region" description="Gly residues" evidence="2">
    <location>
        <begin position="227"/>
        <end position="241"/>
    </location>
</feature>
<feature type="compositionally biased region" description="Basic and acidic residues" evidence="2">
    <location>
        <begin position="257"/>
        <end position="402"/>
    </location>
</feature>
<feature type="compositionally biased region" description="Basic and acidic residues" evidence="2">
    <location>
        <begin position="409"/>
        <end position="427"/>
    </location>
</feature>
<feature type="modified residue" description="Phosphoserine" evidence="11">
    <location>
        <position position="282"/>
    </location>
</feature>
<feature type="splice variant" id="VSP_005853" description="In isoform Short." evidence="10">
    <original>HLVTDQLTNKPKGYAFIEYMHTRDMKAAYKQADGQKI</original>
    <variation>GYSEHSLAGSVRICVMASLSRALCSICFILSTKVFQG</variation>
    <location>
        <begin position="168"/>
        <end position="204"/>
    </location>
</feature>
<feature type="splice variant" id="VSP_005854" description="In isoform Short." evidence="10">
    <location>
        <begin position="205"/>
        <end position="427"/>
    </location>
</feature>
<reference key="1">
    <citation type="journal article" date="1992" name="Biochim. Biophys. Acta">
        <title>Cloning of the cDNA for U1 small nuclear ribonucleoprotein particle 70K protein from Arabidopsis thaliana.</title>
        <authorList>
            <person name="Reddy A.S."/>
            <person name="Czernik A.J."/>
            <person name="An G."/>
            <person name="Poovaiah B.W."/>
        </authorList>
    </citation>
    <scope>NUCLEOTIDE SEQUENCE [MRNA] (ISOFORM LONG)</scope>
    <source>
        <strain>cv. Columbia</strain>
        <tissue>Leaf</tissue>
        <tissue>Stem</tissue>
    </source>
</reference>
<reference key="2">
    <citation type="journal article" date="1996" name="Plant Cell">
        <title>Structure and expression of a plant U1 snRNP 70K gene: alternative splicing of U1 snRNP 70K pre-mRNAs produces two different transcripts.</title>
        <authorList>
            <person name="Golovkin M."/>
            <person name="Reddy A.S."/>
        </authorList>
    </citation>
    <scope>NUCLEOTIDE SEQUENCE [GENOMIC DNA / MRNA] (ISOFORMS LONG AND SHORT)</scope>
    <source>
        <strain>cv. Columbia</strain>
        <tissue>Leaf</tissue>
        <tissue>Stem</tissue>
    </source>
</reference>
<reference key="3">
    <citation type="journal article" date="2000" name="Nature">
        <title>Sequence and analysis of chromosome 3 of the plant Arabidopsis thaliana.</title>
        <authorList>
            <person name="Salanoubat M."/>
            <person name="Lemcke K."/>
            <person name="Rieger M."/>
            <person name="Ansorge W."/>
            <person name="Unseld M."/>
            <person name="Fartmann B."/>
            <person name="Valle G."/>
            <person name="Bloecker H."/>
            <person name="Perez-Alonso M."/>
            <person name="Obermaier B."/>
            <person name="Delseny M."/>
            <person name="Boutry M."/>
            <person name="Grivell L.A."/>
            <person name="Mache R."/>
            <person name="Puigdomenech P."/>
            <person name="De Simone V."/>
            <person name="Choisne N."/>
            <person name="Artiguenave F."/>
            <person name="Robert C."/>
            <person name="Brottier P."/>
            <person name="Wincker P."/>
            <person name="Cattolico L."/>
            <person name="Weissenbach J."/>
            <person name="Saurin W."/>
            <person name="Quetier F."/>
            <person name="Schaefer M."/>
            <person name="Mueller-Auer S."/>
            <person name="Gabel C."/>
            <person name="Fuchs M."/>
            <person name="Benes V."/>
            <person name="Wurmbach E."/>
            <person name="Drzonek H."/>
            <person name="Erfle H."/>
            <person name="Jordan N."/>
            <person name="Bangert S."/>
            <person name="Wiedelmann R."/>
            <person name="Kranz H."/>
            <person name="Voss H."/>
            <person name="Holland R."/>
            <person name="Brandt P."/>
            <person name="Nyakatura G."/>
            <person name="Vezzi A."/>
            <person name="D'Angelo M."/>
            <person name="Pallavicini A."/>
            <person name="Toppo S."/>
            <person name="Simionati B."/>
            <person name="Conrad A."/>
            <person name="Hornischer K."/>
            <person name="Kauer G."/>
            <person name="Loehnert T.-H."/>
            <person name="Nordsiek G."/>
            <person name="Reichelt J."/>
            <person name="Scharfe M."/>
            <person name="Schoen O."/>
            <person name="Bargues M."/>
            <person name="Terol J."/>
            <person name="Climent J."/>
            <person name="Navarro P."/>
            <person name="Collado C."/>
            <person name="Perez-Perez A."/>
            <person name="Ottenwaelder B."/>
            <person name="Duchemin D."/>
            <person name="Cooke R."/>
            <person name="Laudie M."/>
            <person name="Berger-Llauro C."/>
            <person name="Purnelle B."/>
            <person name="Masuy D."/>
            <person name="de Haan M."/>
            <person name="Maarse A.C."/>
            <person name="Alcaraz J.-P."/>
            <person name="Cottet A."/>
            <person name="Casacuberta E."/>
            <person name="Monfort A."/>
            <person name="Argiriou A."/>
            <person name="Flores M."/>
            <person name="Liguori R."/>
            <person name="Vitale D."/>
            <person name="Mannhaupt G."/>
            <person name="Haase D."/>
            <person name="Schoof H."/>
            <person name="Rudd S."/>
            <person name="Zaccaria P."/>
            <person name="Mewes H.-W."/>
            <person name="Mayer K.F.X."/>
            <person name="Kaul S."/>
            <person name="Town C.D."/>
            <person name="Koo H.L."/>
            <person name="Tallon L.J."/>
            <person name="Jenkins J."/>
            <person name="Rooney T."/>
            <person name="Rizzo M."/>
            <person name="Walts A."/>
            <person name="Utterback T."/>
            <person name="Fujii C.Y."/>
            <person name="Shea T.P."/>
            <person name="Creasy T.H."/>
            <person name="Haas B."/>
            <person name="Maiti R."/>
            <person name="Wu D."/>
            <person name="Peterson J."/>
            <person name="Van Aken S."/>
            <person name="Pai G."/>
            <person name="Militscher J."/>
            <person name="Sellers P."/>
            <person name="Gill J.E."/>
            <person name="Feldblyum T.V."/>
            <person name="Preuss D."/>
            <person name="Lin X."/>
            <person name="Nierman W.C."/>
            <person name="Salzberg S.L."/>
            <person name="White O."/>
            <person name="Venter J.C."/>
            <person name="Fraser C.M."/>
            <person name="Kaneko T."/>
            <person name="Nakamura Y."/>
            <person name="Sato S."/>
            <person name="Kato T."/>
            <person name="Asamizu E."/>
            <person name="Sasamoto S."/>
            <person name="Kimura T."/>
            <person name="Idesawa K."/>
            <person name="Kawashima K."/>
            <person name="Kishida Y."/>
            <person name="Kiyokawa C."/>
            <person name="Kohara M."/>
            <person name="Matsumoto M."/>
            <person name="Matsuno A."/>
            <person name="Muraki A."/>
            <person name="Nakayama S."/>
            <person name="Nakazaki N."/>
            <person name="Shinpo S."/>
            <person name="Takeuchi C."/>
            <person name="Wada T."/>
            <person name="Watanabe A."/>
            <person name="Yamada M."/>
            <person name="Yasuda M."/>
            <person name="Tabata S."/>
        </authorList>
    </citation>
    <scope>NUCLEOTIDE SEQUENCE [LARGE SCALE GENOMIC DNA]</scope>
    <source>
        <strain>cv. Columbia</strain>
    </source>
</reference>
<reference key="4">
    <citation type="journal article" date="2017" name="Plant J.">
        <title>Araport11: a complete reannotation of the Arabidopsis thaliana reference genome.</title>
        <authorList>
            <person name="Cheng C.Y."/>
            <person name="Krishnakumar V."/>
            <person name="Chan A.P."/>
            <person name="Thibaud-Nissen F."/>
            <person name="Schobel S."/>
            <person name="Town C.D."/>
        </authorList>
    </citation>
    <scope>GENOME REANNOTATION</scope>
    <source>
        <strain>cv. Columbia</strain>
    </source>
</reference>
<reference key="5">
    <citation type="journal article" date="2003" name="Science">
        <title>Empirical analysis of transcriptional activity in the Arabidopsis genome.</title>
        <authorList>
            <person name="Yamada K."/>
            <person name="Lim J."/>
            <person name="Dale J.M."/>
            <person name="Chen H."/>
            <person name="Shinn P."/>
            <person name="Palm C.J."/>
            <person name="Southwick A.M."/>
            <person name="Wu H.C."/>
            <person name="Kim C.J."/>
            <person name="Nguyen M."/>
            <person name="Pham P.K."/>
            <person name="Cheuk R.F."/>
            <person name="Karlin-Newmann G."/>
            <person name="Liu S.X."/>
            <person name="Lam B."/>
            <person name="Sakano H."/>
            <person name="Wu T."/>
            <person name="Yu G."/>
            <person name="Miranda M."/>
            <person name="Quach H.L."/>
            <person name="Tripp M."/>
            <person name="Chang C.H."/>
            <person name="Lee J.M."/>
            <person name="Toriumi M.J."/>
            <person name="Chan M.M."/>
            <person name="Tang C.C."/>
            <person name="Onodera C.S."/>
            <person name="Deng J.M."/>
            <person name="Akiyama K."/>
            <person name="Ansari Y."/>
            <person name="Arakawa T."/>
            <person name="Banh J."/>
            <person name="Banno F."/>
            <person name="Bowser L."/>
            <person name="Brooks S.Y."/>
            <person name="Carninci P."/>
            <person name="Chao Q."/>
            <person name="Choy N."/>
            <person name="Enju A."/>
            <person name="Goldsmith A.D."/>
            <person name="Gurjal M."/>
            <person name="Hansen N.F."/>
            <person name="Hayashizaki Y."/>
            <person name="Johnson-Hopson C."/>
            <person name="Hsuan V.W."/>
            <person name="Iida K."/>
            <person name="Karnes M."/>
            <person name="Khan S."/>
            <person name="Koesema E."/>
            <person name="Ishida J."/>
            <person name="Jiang P.X."/>
            <person name="Jones T."/>
            <person name="Kawai J."/>
            <person name="Kamiya A."/>
            <person name="Meyers C."/>
            <person name="Nakajima M."/>
            <person name="Narusaka M."/>
            <person name="Seki M."/>
            <person name="Sakurai T."/>
            <person name="Satou M."/>
            <person name="Tamse R."/>
            <person name="Vaysberg M."/>
            <person name="Wallender E.K."/>
            <person name="Wong C."/>
            <person name="Yamamura Y."/>
            <person name="Yuan S."/>
            <person name="Shinozaki K."/>
            <person name="Davis R.W."/>
            <person name="Theologis A."/>
            <person name="Ecker J.R."/>
        </authorList>
    </citation>
    <scope>NUCLEOTIDE SEQUENCE [LARGE SCALE MRNA] (ISOFORM LONG)</scope>
    <source>
        <strain>cv. Columbia</strain>
    </source>
</reference>
<reference key="6">
    <citation type="journal article" date="1998" name="Plant Cell">
        <title>The plant U1 small nuclear ribonucleoprotein particle 70K protein interacts with two novel serine/arginine-rich proteins.</title>
        <authorList>
            <person name="Golovkin M."/>
            <person name="Reddy A.S."/>
        </authorList>
    </citation>
    <scope>INTERACTION WITH RSZ21 AND RSZ22</scope>
</reference>
<reference key="7">
    <citation type="journal article" date="1999" name="J. Biol. Chem.">
        <title>An SC35-like protein and a novel serine/arginine-rich protein interact with Arabidopsis U1-70K protein.</title>
        <authorList>
            <person name="Golovkin M."/>
            <person name="Reddy A.S.N."/>
        </authorList>
    </citation>
    <scope>INTERACTION WITH SR45 AND SCL33</scope>
</reference>
<reference key="8">
    <citation type="journal article" date="2004" name="J. Biol. Chem.">
        <title>Interactions of Arabidopsis RS domain containing cyclophilins with SR proteins and U1 and U11 small nuclear ribonucleoprotein-specific proteins suggest their involvement in pre-mRNA Splicing.</title>
        <authorList>
            <person name="Lorkovic Z.J."/>
            <person name="Lopato S."/>
            <person name="Pexa M."/>
            <person name="Lehner R."/>
            <person name="Barta A."/>
        </authorList>
    </citation>
    <scope>INTERACTION WITH SR34; CYP63 AND CYP95</scope>
</reference>
<reference key="9">
    <citation type="journal article" date="2004" name="Mol. Biol. Cell">
        <title>Use of fluorescent protein tags to study nuclear organization of the spliceosomal machinery in transiently transformed living plant cells.</title>
        <authorList>
            <person name="Lorkovic Z.J."/>
            <person name="Hilscher J."/>
            <person name="Barta A."/>
        </authorList>
    </citation>
    <scope>SUBCELLULAR LOCATION</scope>
</reference>
<reference key="10">
    <citation type="journal article" date="2007" name="Plant Cell Physiol.">
        <title>Differential expression of alternatively spliced mRNAs of Arabidopsis SR protein homologs, atSR30 and atSR45a, in response to environmental stress.</title>
        <authorList>
            <person name="Tanabe N."/>
            <person name="Yoshimura K."/>
            <person name="Kimura A."/>
            <person name="Yabuta Y."/>
            <person name="Shigeoka S."/>
        </authorList>
    </citation>
    <scope>INTERACTION WITH SR45A</scope>
</reference>
<reference key="11">
    <citation type="journal article" date="2008" name="PLoS ONE">
        <title>Analyses of in vivo interaction and mobility of two spliceosomal proteins using FRAP and BiFC.</title>
        <authorList>
            <person name="Ali G.S."/>
            <person name="Prasad K.V."/>
            <person name="Hanumappa M."/>
            <person name="Reddy A.S."/>
        </authorList>
    </citation>
    <scope>SUBCELLULAR LOCATION</scope>
    <scope>INTERACTION WITH SR45</scope>
    <scope>PHOSPHORYLATION</scope>
</reference>
<reference key="12">
    <citation type="journal article" date="2009" name="Plant Physiol.">
        <title>Large-scale Arabidopsis phosphoproteome profiling reveals novel chloroplast kinase substrates and phosphorylation networks.</title>
        <authorList>
            <person name="Reiland S."/>
            <person name="Messerli G."/>
            <person name="Baerenfaller K."/>
            <person name="Gerrits B."/>
            <person name="Endler A."/>
            <person name="Grossmann J."/>
            <person name="Gruissem W."/>
            <person name="Baginsky S."/>
        </authorList>
    </citation>
    <scope>PHOSPHORYLATION [LARGE SCALE ANALYSIS] AT SER-282</scope>
    <scope>IDENTIFICATION BY MASS SPECTROMETRY [LARGE SCALE ANALYSIS]</scope>
</reference>
<reference key="13">
    <citation type="journal article" date="2012" name="Plant J.">
        <title>Interactions of SR45, an SR-like protein, with spliceosomal proteins and an intronic sequence: insights into regulated splicing.</title>
        <authorList>
            <person name="Day I.S."/>
            <person name="Golovkin M."/>
            <person name="Palusa S.G."/>
            <person name="Link A."/>
            <person name="Ali G.S."/>
            <person name="Thomas J."/>
            <person name="Richardson D.N."/>
            <person name="Reddy A.S."/>
        </authorList>
    </citation>
    <scope>INTERACTION WITH SR45; U2AF35A AND U2AF35B</scope>
</reference>
<protein>
    <recommendedName>
        <fullName>U1 small nuclear ribonucleoprotein 70 kDa</fullName>
        <shortName>U1 snRNP 70 kDa</shortName>
        <shortName>U1-70K</shortName>
        <shortName>snRNP70</shortName>
    </recommendedName>
</protein>
<sequence>MGDSGDPFLRNPNAAVQARAKVQNRANVLQLKLMGQSHPTGLTNNLLKLFEPRPPLEYKPPPEKRKCPPYTGMAQFVSNFAEPGDPEYAPPKPEVELPSQKRERIHKLRLEKGVEKAAEDLKKYDPNNDPNATGDPYKTLFVSRLNYESSESKIKREFESYGPIKRVHLVTDQLTNKPKGYAFIEYMHTRDMKAAYKQADGQKIDGRRVLVDVERGRTVPNWRPRRLGGGLGTSRVGGGEEIVGEQQPQGRTSQSEEPSRPREEREKSREKGKERERSRELSHEQPRERSRDRPREDKHHRDRDQGGRDRDRDSRRDRDRTRDRGDRDRRDRDRGRDRTSRDHDRDRSRKKERDYEGGEYEHEGGGRSRERDAEYRGEPEETRGYYEDDQGDTDRYSHRYDKMEEDDFRYEREYKRSKRSESREYVR</sequence>
<keyword id="KW-0025">Alternative splicing</keyword>
<keyword id="KW-0507">mRNA processing</keyword>
<keyword id="KW-0508">mRNA splicing</keyword>
<keyword id="KW-0539">Nucleus</keyword>
<keyword id="KW-0597">Phosphoprotein</keyword>
<keyword id="KW-1185">Reference proteome</keyword>
<keyword id="KW-0687">Ribonucleoprotein</keyword>
<keyword id="KW-0694">RNA-binding</keyword>
<keyword id="KW-0747">Spliceosome</keyword>
<organism>
    <name type="scientific">Arabidopsis thaliana</name>
    <name type="common">Mouse-ear cress</name>
    <dbReference type="NCBI Taxonomy" id="3702"/>
    <lineage>
        <taxon>Eukaryota</taxon>
        <taxon>Viridiplantae</taxon>
        <taxon>Streptophyta</taxon>
        <taxon>Embryophyta</taxon>
        <taxon>Tracheophyta</taxon>
        <taxon>Spermatophyta</taxon>
        <taxon>Magnoliopsida</taxon>
        <taxon>eudicotyledons</taxon>
        <taxon>Gunneridae</taxon>
        <taxon>Pentapetalae</taxon>
        <taxon>rosids</taxon>
        <taxon>malvids</taxon>
        <taxon>Brassicales</taxon>
        <taxon>Brassicaceae</taxon>
        <taxon>Camelineae</taxon>
        <taxon>Arabidopsis</taxon>
    </lineage>
</organism>